<protein>
    <recommendedName>
        <fullName evidence="14">Sushi, nidogen and EGF-like domain-containing protein 1</fullName>
    </recommendedName>
    <alternativeName>
        <fullName evidence="10">Insulin-responsive sequence DNA-binding protein 1</fullName>
        <shortName evidence="10">IRE-BP1</shortName>
    </alternativeName>
</protein>
<proteinExistence type="evidence at protein level"/>
<feature type="signal peptide" evidence="2">
    <location>
        <begin position="1"/>
        <end position="24"/>
    </location>
</feature>
<feature type="chain" id="PRO_0000299554" description="Sushi, nidogen and EGF-like domain-containing protein 1">
    <location>
        <begin position="25"/>
        <end position="1413"/>
    </location>
</feature>
<feature type="domain" description="NIDO" evidence="6">
    <location>
        <begin position="103"/>
        <end position="258"/>
    </location>
</feature>
<feature type="domain" description="EGF-like 1" evidence="3">
    <location>
        <begin position="268"/>
        <end position="309"/>
    </location>
</feature>
<feature type="domain" description="EGF-like 2" evidence="3">
    <location>
        <begin position="311"/>
        <end position="347"/>
    </location>
</feature>
<feature type="domain" description="EGF-like 3" evidence="3">
    <location>
        <begin position="349"/>
        <end position="385"/>
    </location>
</feature>
<feature type="domain" description="Follistatin-like 1">
    <location>
        <begin position="352"/>
        <end position="374"/>
    </location>
</feature>
<feature type="domain" description="EGF-like 4; calcium-binding" evidence="3">
    <location>
        <begin position="387"/>
        <end position="423"/>
    </location>
</feature>
<feature type="domain" description="EGF-like 5" evidence="3">
    <location>
        <begin position="429"/>
        <end position="465"/>
    </location>
</feature>
<feature type="domain" description="EGF-like 6" evidence="3">
    <location>
        <begin position="468"/>
        <end position="500"/>
    </location>
</feature>
<feature type="domain" description="Follistatin-like 2">
    <location>
        <begin position="507"/>
        <end position="530"/>
    </location>
</feature>
<feature type="domain" description="EGF-like 7" evidence="3">
    <location>
        <begin position="541"/>
        <end position="577"/>
    </location>
</feature>
<feature type="domain" description="EGF-like 8" evidence="3">
    <location>
        <begin position="580"/>
        <end position="616"/>
    </location>
</feature>
<feature type="domain" description="EGF-like 9" evidence="3">
    <location>
        <begin position="619"/>
        <end position="655"/>
    </location>
</feature>
<feature type="domain" description="EGF-like 10" evidence="3">
    <location>
        <begin position="657"/>
        <end position="693"/>
    </location>
</feature>
<feature type="domain" description="Sushi" evidence="4">
    <location>
        <begin position="696"/>
        <end position="753"/>
    </location>
</feature>
<feature type="domain" description="EGF-like 11; calcium-binding" evidence="3">
    <location>
        <begin position="753"/>
        <end position="789"/>
    </location>
</feature>
<feature type="domain" description="EGF-like 12; calcium-binding" evidence="3">
    <location>
        <begin position="791"/>
        <end position="827"/>
    </location>
</feature>
<feature type="domain" description="EGF-like 13" evidence="3">
    <location>
        <begin position="829"/>
        <end position="865"/>
    </location>
</feature>
<feature type="domain" description="EGF-like 14" evidence="3">
    <location>
        <begin position="867"/>
        <end position="903"/>
    </location>
</feature>
<feature type="domain" description="Fibronectin type-III 1" evidence="5">
    <location>
        <begin position="908"/>
        <end position="1006"/>
    </location>
</feature>
<feature type="domain" description="Fibronectin type-III 2" evidence="5">
    <location>
        <begin position="1007"/>
        <end position="1105"/>
    </location>
</feature>
<feature type="domain" description="Fibronectin type-III 3" evidence="5">
    <location>
        <begin position="1106"/>
        <end position="1200"/>
    </location>
</feature>
<feature type="domain" description="EGF-like 15" evidence="3">
    <location>
        <begin position="1307"/>
        <end position="1343"/>
    </location>
</feature>
<feature type="region of interest" description="Disordered" evidence="7">
    <location>
        <begin position="1206"/>
        <end position="1226"/>
    </location>
</feature>
<feature type="region of interest" description="Disordered" evidence="7">
    <location>
        <begin position="1394"/>
        <end position="1413"/>
    </location>
</feature>
<feature type="compositionally biased region" description="Basic residues" evidence="7">
    <location>
        <begin position="1207"/>
        <end position="1217"/>
    </location>
</feature>
<feature type="glycosylation site" description="N-linked (GlcNAc...) asparagine" evidence="2">
    <location>
        <position position="145"/>
    </location>
</feature>
<feature type="glycosylation site" description="N-linked (GlcNAc...) asparagine" evidence="2">
    <location>
        <position position="204"/>
    </location>
</feature>
<feature type="glycosylation site" description="N-linked (GlcNAc...) asparagine" evidence="2">
    <location>
        <position position="292"/>
    </location>
</feature>
<feature type="glycosylation site" description="N-linked (GlcNAc...) asparagine" evidence="2">
    <location>
        <position position="368"/>
    </location>
</feature>
<feature type="glycosylation site" description="N-linked (GlcNAc...) asparagine" evidence="2">
    <location>
        <position position="408"/>
    </location>
</feature>
<feature type="glycosylation site" description="N-linked (GlcNAc...) asparagine" evidence="2">
    <location>
        <position position="484"/>
    </location>
</feature>
<feature type="glycosylation site" description="N-linked (GlcNAc...) asparagine" evidence="2">
    <location>
        <position position="536"/>
    </location>
</feature>
<feature type="glycosylation site" description="N-linked (GlcNAc...) asparagine" evidence="2">
    <location>
        <position position="712"/>
    </location>
</feature>
<feature type="glycosylation site" description="N-linked (GlcNAc...) asparagine" evidence="2">
    <location>
        <position position="886"/>
    </location>
</feature>
<feature type="glycosylation site" description="N-linked (GlcNAc...) asparagine" evidence="2">
    <location>
        <position position="977"/>
    </location>
</feature>
<feature type="glycosylation site" description="N-linked (GlcNAc...) asparagine" evidence="2">
    <location>
        <position position="1015"/>
    </location>
</feature>
<feature type="glycosylation site" description="N-linked (GlcNAc...) asparagine" evidence="2">
    <location>
        <position position="1109"/>
    </location>
</feature>
<feature type="glycosylation site" description="N-linked (GlcNAc...) asparagine" evidence="2">
    <location>
        <position position="1139"/>
    </location>
</feature>
<feature type="glycosylation site" description="N-linked (GlcNAc...) asparagine" evidence="2">
    <location>
        <position position="1310"/>
    </location>
</feature>
<feature type="disulfide bond" evidence="3">
    <location>
        <begin position="272"/>
        <end position="284"/>
    </location>
</feature>
<feature type="disulfide bond" evidence="3">
    <location>
        <begin position="278"/>
        <end position="297"/>
    </location>
</feature>
<feature type="disulfide bond" evidence="3">
    <location>
        <begin position="299"/>
        <end position="308"/>
    </location>
</feature>
<feature type="disulfide bond" evidence="3">
    <location>
        <begin position="315"/>
        <end position="326"/>
    </location>
</feature>
<feature type="disulfide bond" evidence="3">
    <location>
        <begin position="320"/>
        <end position="335"/>
    </location>
</feature>
<feature type="disulfide bond" evidence="3">
    <location>
        <begin position="337"/>
        <end position="346"/>
    </location>
</feature>
<feature type="disulfide bond" evidence="3">
    <location>
        <begin position="353"/>
        <end position="364"/>
    </location>
</feature>
<feature type="disulfide bond" evidence="3">
    <location>
        <begin position="358"/>
        <end position="373"/>
    </location>
</feature>
<feature type="disulfide bond" evidence="3">
    <location>
        <begin position="375"/>
        <end position="384"/>
    </location>
</feature>
<feature type="disulfide bond" evidence="3">
    <location>
        <begin position="391"/>
        <end position="402"/>
    </location>
</feature>
<feature type="disulfide bond" evidence="3">
    <location>
        <begin position="396"/>
        <end position="411"/>
    </location>
</feature>
<feature type="disulfide bond" evidence="3">
    <location>
        <begin position="413"/>
        <end position="422"/>
    </location>
</feature>
<feature type="disulfide bond" evidence="3">
    <location>
        <begin position="433"/>
        <end position="444"/>
    </location>
</feature>
<feature type="disulfide bond" evidence="3">
    <location>
        <begin position="438"/>
        <end position="453"/>
    </location>
</feature>
<feature type="disulfide bond" evidence="3">
    <location>
        <begin position="455"/>
        <end position="464"/>
    </location>
</feature>
<feature type="disulfide bond" evidence="3">
    <location>
        <begin position="472"/>
        <end position="480"/>
    </location>
</feature>
<feature type="disulfide bond" evidence="3">
    <location>
        <begin position="474"/>
        <end position="488"/>
    </location>
</feature>
<feature type="disulfide bond" evidence="3">
    <location>
        <begin position="490"/>
        <end position="499"/>
    </location>
</feature>
<feature type="disulfide bond" evidence="3">
    <location>
        <begin position="545"/>
        <end position="556"/>
    </location>
</feature>
<feature type="disulfide bond" evidence="3">
    <location>
        <begin position="550"/>
        <end position="565"/>
    </location>
</feature>
<feature type="disulfide bond" evidence="3">
    <location>
        <begin position="567"/>
        <end position="576"/>
    </location>
</feature>
<feature type="disulfide bond" evidence="3">
    <location>
        <begin position="584"/>
        <end position="595"/>
    </location>
</feature>
<feature type="disulfide bond" evidence="3">
    <location>
        <begin position="589"/>
        <end position="604"/>
    </location>
</feature>
<feature type="disulfide bond" evidence="3">
    <location>
        <begin position="606"/>
        <end position="615"/>
    </location>
</feature>
<feature type="disulfide bond" evidence="3">
    <location>
        <begin position="623"/>
        <end position="634"/>
    </location>
</feature>
<feature type="disulfide bond" evidence="3">
    <location>
        <begin position="628"/>
        <end position="643"/>
    </location>
</feature>
<feature type="disulfide bond" evidence="3">
    <location>
        <begin position="645"/>
        <end position="654"/>
    </location>
</feature>
<feature type="disulfide bond" evidence="3">
    <location>
        <begin position="661"/>
        <end position="672"/>
    </location>
</feature>
<feature type="disulfide bond" evidence="3">
    <location>
        <begin position="666"/>
        <end position="681"/>
    </location>
</feature>
<feature type="disulfide bond" evidence="3">
    <location>
        <begin position="683"/>
        <end position="692"/>
    </location>
</feature>
<feature type="disulfide bond" evidence="4">
    <location>
        <begin position="698"/>
        <end position="739"/>
    </location>
</feature>
<feature type="disulfide bond" evidence="4">
    <location>
        <begin position="724"/>
        <end position="751"/>
    </location>
</feature>
<feature type="disulfide bond" evidence="3">
    <location>
        <begin position="757"/>
        <end position="768"/>
    </location>
</feature>
<feature type="disulfide bond" evidence="3">
    <location>
        <begin position="762"/>
        <end position="777"/>
    </location>
</feature>
<feature type="disulfide bond" evidence="3">
    <location>
        <begin position="779"/>
        <end position="788"/>
    </location>
</feature>
<feature type="disulfide bond" evidence="3">
    <location>
        <begin position="795"/>
        <end position="806"/>
    </location>
</feature>
<feature type="disulfide bond" evidence="3">
    <location>
        <begin position="800"/>
        <end position="815"/>
    </location>
</feature>
<feature type="disulfide bond" evidence="3">
    <location>
        <begin position="817"/>
        <end position="826"/>
    </location>
</feature>
<feature type="disulfide bond" evidence="3">
    <location>
        <begin position="833"/>
        <end position="844"/>
    </location>
</feature>
<feature type="disulfide bond" evidence="3">
    <location>
        <begin position="838"/>
        <end position="853"/>
    </location>
</feature>
<feature type="disulfide bond" evidence="3">
    <location>
        <begin position="855"/>
        <end position="864"/>
    </location>
</feature>
<feature type="disulfide bond" evidence="3">
    <location>
        <begin position="871"/>
        <end position="882"/>
    </location>
</feature>
<feature type="disulfide bond" evidence="3">
    <location>
        <begin position="876"/>
        <end position="891"/>
    </location>
</feature>
<feature type="disulfide bond" evidence="3">
    <location>
        <begin position="893"/>
        <end position="902"/>
    </location>
</feature>
<feature type="disulfide bond" evidence="3">
    <location>
        <begin position="1311"/>
        <end position="1322"/>
    </location>
</feature>
<feature type="disulfide bond" evidence="3">
    <location>
        <begin position="1316"/>
        <end position="1331"/>
    </location>
</feature>
<feature type="disulfide bond" evidence="3">
    <location>
        <begin position="1333"/>
        <end position="1342"/>
    </location>
</feature>
<feature type="splice variant" id="VSP_027749" description="In isoform 2 and isoform 3." evidence="11 13">
    <original>QPTASAQLENMEEAPKRVSLALQLPEHGSKDIGN</original>
    <variation>H</variation>
    <location>
        <begin position="1273"/>
        <end position="1306"/>
    </location>
</feature>
<feature type="splice variant" id="VSP_027750" description="In isoform 4." evidence="10">
    <original>NVPGNCSENPCQNGGTCVP</original>
    <variation>SESAALVGTLGLTDCSQGP</variation>
    <location>
        <begin position="1306"/>
        <end position="1324"/>
    </location>
</feature>
<feature type="splice variant" id="VSP_027751" description="In isoform 4." evidence="10">
    <location>
        <begin position="1325"/>
        <end position="1413"/>
    </location>
</feature>
<feature type="splice variant" id="VSP_027752" description="In isoform 2." evidence="13">
    <location>
        <begin position="1375"/>
        <end position="1402"/>
    </location>
</feature>
<feature type="splice variant" id="VSP_027753" description="In isoform 3." evidence="11">
    <original>K</original>
    <variation>L</variation>
    <location>
        <position position="1398"/>
    </location>
</feature>
<feature type="splice variant" id="VSP_027754" description="In isoform 3." evidence="11">
    <location>
        <begin position="1399"/>
        <end position="1413"/>
    </location>
</feature>
<feature type="sequence variant" id="VAR_034847" description="In dbSNP:rs17440466.">
    <original>L</original>
    <variation>P</variation>
    <location>
        <position position="1228"/>
    </location>
</feature>
<feature type="sequence variant" id="VAR_034848" description="In dbSNP:rs6721345.">
    <original>R</original>
    <variation>Q</variation>
    <location>
        <position position="1289"/>
    </location>
</feature>
<feature type="sequence variant" id="VAR_034849" description="In dbSNP:rs6708120.">
    <original>H</original>
    <variation>R</variation>
    <location>
        <position position="1299"/>
    </location>
</feature>
<feature type="sequence variant" id="VAR_034850" description="In dbSNP:rs2108485." evidence="8">
    <original>A</original>
    <variation>S</variation>
    <location>
        <position position="1362"/>
    </location>
</feature>
<feature type="sequence conflict" description="In Ref. 3; AAQ04558." evidence="14" ref="3">
    <original>D</original>
    <variation>N</variation>
    <location>
        <position position="546"/>
    </location>
</feature>
<feature type="sequence conflict" description="In Ref. 3; AAQ04558." evidence="14" ref="3">
    <original>H</original>
    <variation>Y</variation>
    <location>
        <position position="653"/>
    </location>
</feature>
<feature type="sequence conflict" description="In Ref. 3; AAQ04558." evidence="14" ref="3">
    <original>V</original>
    <variation>A</variation>
    <location>
        <position position="719"/>
    </location>
</feature>
<feature type="sequence conflict" description="In Ref. 3; AAQ04558." evidence="14" ref="3">
    <original>S</original>
    <variation>G</variation>
    <location>
        <position position="858"/>
    </location>
</feature>
<feature type="sequence conflict" description="In Ref. 3; AAQ04558." evidence="14" ref="3">
    <original>HSEPAHLYIITSPRDGADRRW</original>
    <variation>Q</variation>
    <location>
        <begin position="1186"/>
        <end position="1206"/>
    </location>
</feature>
<name>SNED1_HUMAN</name>
<comment type="subcellular location">
    <subcellularLocation>
        <location evidence="9">Secreted</location>
        <location evidence="9">Extracellular space</location>
        <location evidence="9">Extracellular matrix</location>
    </subcellularLocation>
    <text evidence="1">Forms microfibrils within the extracellular matrix and colocalizes with fibronectin (FN1).</text>
</comment>
<comment type="alternative products">
    <event type="alternative splicing"/>
    <isoform>
        <id>Q8TER0-1</id>
        <name>1</name>
        <sequence type="displayed"/>
    </isoform>
    <isoform>
        <id>Q8TER0-3</id>
        <name>2</name>
        <sequence type="described" ref="VSP_027749 VSP_027752"/>
    </isoform>
    <isoform>
        <id>Q8TER0-4</id>
        <name>3</name>
        <sequence type="described" ref="VSP_027749 VSP_027753 VSP_027754"/>
    </isoform>
    <isoform>
        <id>Q8TER0-5</id>
        <name>4</name>
        <sequence type="described" ref="VSP_027750 VSP_027751"/>
    </isoform>
</comment>
<comment type="PTM">
    <text evidence="9">Phosphorylated on serine and threonine residues.</text>
</comment>
<comment type="PTM">
    <text evidence="9">N-glycosylated.</text>
</comment>
<comment type="sequence caution" evidence="14">
    <conflict type="miscellaneous discrepancy">
        <sequence resource="EMBL-CDS" id="AAH27939"/>
    </conflict>
    <text>Intron retention. The N-terminal region arises from intron retention.</text>
</comment>
<comment type="sequence caution" evidence="14">
    <conflict type="erroneous initiation">
        <sequence resource="EMBL-CDS" id="AAQ04558"/>
    </conflict>
</comment>
<dbReference type="EMBL" id="AC005237">
    <property type="status" value="NOT_ANNOTATED_CDS"/>
    <property type="molecule type" value="Genomic_DNA"/>
</dbReference>
<dbReference type="EMBL" id="AC093585">
    <property type="status" value="NOT_ANNOTATED_CDS"/>
    <property type="molecule type" value="Genomic_DNA"/>
</dbReference>
<dbReference type="EMBL" id="AC104809">
    <property type="status" value="NOT_ANNOTATED_CDS"/>
    <property type="molecule type" value="Genomic_DNA"/>
</dbReference>
<dbReference type="EMBL" id="AK074062">
    <property type="protein sequence ID" value="BAB84888.1"/>
    <property type="molecule type" value="mRNA"/>
</dbReference>
<dbReference type="EMBL" id="AK074075">
    <property type="protein sequence ID" value="BAB84901.1"/>
    <property type="molecule type" value="mRNA"/>
</dbReference>
<dbReference type="EMBL" id="AF439717">
    <property type="protein sequence ID" value="AAQ04558.1"/>
    <property type="status" value="ALT_INIT"/>
    <property type="molecule type" value="mRNA"/>
</dbReference>
<dbReference type="EMBL" id="AF439718">
    <property type="protein sequence ID" value="AAQ04563.1"/>
    <property type="molecule type" value="mRNA"/>
</dbReference>
<dbReference type="EMBL" id="BC027939">
    <property type="protein sequence ID" value="AAH27939.1"/>
    <property type="status" value="ALT_SEQ"/>
    <property type="molecule type" value="mRNA"/>
</dbReference>
<dbReference type="CCDS" id="CCDS46562.1">
    <molecule id="Q8TER0-1"/>
</dbReference>
<dbReference type="RefSeq" id="NP_001073906.1">
    <molecule id="Q8TER0-1"/>
    <property type="nucleotide sequence ID" value="NM_001080437.3"/>
</dbReference>
<dbReference type="SMR" id="Q8TER0"/>
<dbReference type="BioGRID" id="117471">
    <property type="interactions" value="4"/>
</dbReference>
<dbReference type="FunCoup" id="Q8TER0">
    <property type="interactions" value="46"/>
</dbReference>
<dbReference type="IntAct" id="Q8TER0">
    <property type="interactions" value="2"/>
</dbReference>
<dbReference type="STRING" id="9606.ENSP00000308893"/>
<dbReference type="GlyCosmos" id="Q8TER0">
    <property type="glycosylation" value="15 sites, 1 glycan"/>
</dbReference>
<dbReference type="GlyGen" id="Q8TER0">
    <property type="glycosylation" value="18 sites, 3 N-linked glycans (3 sites), 2 O-linked glycans (3 sites)"/>
</dbReference>
<dbReference type="iPTMnet" id="Q8TER0"/>
<dbReference type="PhosphoSitePlus" id="Q8TER0"/>
<dbReference type="BioMuta" id="SNED1"/>
<dbReference type="DMDM" id="158563933"/>
<dbReference type="MassIVE" id="Q8TER0"/>
<dbReference type="PaxDb" id="9606-ENSP00000308893"/>
<dbReference type="PeptideAtlas" id="Q8TER0"/>
<dbReference type="ProteomicsDB" id="74481">
    <molecule id="Q8TER0-1"/>
</dbReference>
<dbReference type="ProteomicsDB" id="74482">
    <molecule id="Q8TER0-3"/>
</dbReference>
<dbReference type="ProteomicsDB" id="74483">
    <molecule id="Q8TER0-4"/>
</dbReference>
<dbReference type="ProteomicsDB" id="74484">
    <molecule id="Q8TER0-5"/>
</dbReference>
<dbReference type="Antibodypedia" id="34540">
    <property type="antibodies" value="76 antibodies from 15 providers"/>
</dbReference>
<dbReference type="DNASU" id="25992"/>
<dbReference type="Ensembl" id="ENST00000310397.13">
    <molecule id="Q8TER0-1"/>
    <property type="protein sequence ID" value="ENSP00000308893.8"/>
    <property type="gene ID" value="ENSG00000162804.15"/>
</dbReference>
<dbReference type="Ensembl" id="ENST00000401884.5">
    <molecule id="Q8TER0-5"/>
    <property type="protein sequence ID" value="ENSP00000384871.1"/>
    <property type="gene ID" value="ENSG00000162804.15"/>
</dbReference>
<dbReference type="Ensembl" id="ENST00000405547.7">
    <molecule id="Q8TER0-3"/>
    <property type="protein sequence ID" value="ENSP00000386007.3"/>
    <property type="gene ID" value="ENSG00000162804.15"/>
</dbReference>
<dbReference type="GeneID" id="25992"/>
<dbReference type="KEGG" id="hsa:25992"/>
<dbReference type="MANE-Select" id="ENST00000310397.13">
    <property type="protein sequence ID" value="ENSP00000308893.8"/>
    <property type="RefSeq nucleotide sequence ID" value="NM_001080437.3"/>
    <property type="RefSeq protein sequence ID" value="NP_001073906.1"/>
</dbReference>
<dbReference type="UCSC" id="uc002wah.2">
    <molecule id="Q8TER0-1"/>
    <property type="organism name" value="human"/>
</dbReference>
<dbReference type="AGR" id="HGNC:24696"/>
<dbReference type="CTD" id="25992"/>
<dbReference type="DisGeNET" id="25992"/>
<dbReference type="GeneCards" id="SNED1"/>
<dbReference type="HGNC" id="HGNC:24696">
    <property type="gene designation" value="SNED1"/>
</dbReference>
<dbReference type="HPA" id="ENSG00000162804">
    <property type="expression patterns" value="Low tissue specificity"/>
</dbReference>
<dbReference type="MIM" id="616634">
    <property type="type" value="gene"/>
</dbReference>
<dbReference type="neXtProt" id="NX_Q8TER0"/>
<dbReference type="OpenTargets" id="ENSG00000162804"/>
<dbReference type="PharmGKB" id="PA134946370"/>
<dbReference type="VEuPathDB" id="HostDB:ENSG00000162804"/>
<dbReference type="eggNOG" id="KOG1217">
    <property type="taxonomic scope" value="Eukaryota"/>
</dbReference>
<dbReference type="eggNOG" id="KOG4291">
    <property type="taxonomic scope" value="Eukaryota"/>
</dbReference>
<dbReference type="GeneTree" id="ENSGT00940000160730"/>
<dbReference type="HOGENOM" id="CLU_005107_0_0_1"/>
<dbReference type="InParanoid" id="Q8TER0"/>
<dbReference type="OMA" id="RGYRRHY"/>
<dbReference type="OrthoDB" id="9972657at2759"/>
<dbReference type="PAN-GO" id="Q8TER0">
    <property type="GO annotations" value="1 GO annotation based on evolutionary models"/>
</dbReference>
<dbReference type="PhylomeDB" id="Q8TER0"/>
<dbReference type="TreeFam" id="TF335195"/>
<dbReference type="PathwayCommons" id="Q8TER0"/>
<dbReference type="SignaLink" id="Q8TER0"/>
<dbReference type="BioGRID-ORCS" id="25992">
    <property type="hits" value="8 hits in 1137 CRISPR screens"/>
</dbReference>
<dbReference type="ChiTaRS" id="SNED1">
    <property type="organism name" value="human"/>
</dbReference>
<dbReference type="GenomeRNAi" id="25992"/>
<dbReference type="Pharos" id="Q8TER0">
    <property type="development level" value="Tbio"/>
</dbReference>
<dbReference type="PRO" id="PR:Q8TER0"/>
<dbReference type="Proteomes" id="UP000005640">
    <property type="component" value="Chromosome 2"/>
</dbReference>
<dbReference type="RNAct" id="Q8TER0">
    <property type="molecule type" value="protein"/>
</dbReference>
<dbReference type="Bgee" id="ENSG00000162804">
    <property type="expression patterns" value="Expressed in sural nerve and 158 other cell types or tissues"/>
</dbReference>
<dbReference type="ExpressionAtlas" id="Q8TER0">
    <property type="expression patterns" value="baseline and differential"/>
</dbReference>
<dbReference type="GO" id="GO:0031012">
    <property type="term" value="C:extracellular matrix"/>
    <property type="evidence" value="ECO:0000314"/>
    <property type="project" value="UniProtKB"/>
</dbReference>
<dbReference type="GO" id="GO:0005576">
    <property type="term" value="C:extracellular region"/>
    <property type="evidence" value="ECO:0007669"/>
    <property type="project" value="UniProtKB-KW"/>
</dbReference>
<dbReference type="GO" id="GO:0005509">
    <property type="term" value="F:calcium ion binding"/>
    <property type="evidence" value="ECO:0007669"/>
    <property type="project" value="InterPro"/>
</dbReference>
<dbReference type="GO" id="GO:0005112">
    <property type="term" value="F:Notch binding"/>
    <property type="evidence" value="ECO:0000318"/>
    <property type="project" value="GO_Central"/>
</dbReference>
<dbReference type="GO" id="GO:0007160">
    <property type="term" value="P:cell-matrix adhesion"/>
    <property type="evidence" value="ECO:0007669"/>
    <property type="project" value="InterPro"/>
</dbReference>
<dbReference type="CDD" id="cd00033">
    <property type="entry name" value="CCP"/>
    <property type="match status" value="1"/>
</dbReference>
<dbReference type="CDD" id="cd00054">
    <property type="entry name" value="EGF_CA"/>
    <property type="match status" value="12"/>
</dbReference>
<dbReference type="CDD" id="cd00063">
    <property type="entry name" value="FN3"/>
    <property type="match status" value="3"/>
</dbReference>
<dbReference type="FunFam" id="2.10.25.10:FF:000327">
    <property type="entry name" value="neurogenic locus notch homolog protein 4"/>
    <property type="match status" value="1"/>
</dbReference>
<dbReference type="FunFam" id="2.10.25.10:FF:000057">
    <property type="entry name" value="protocadherin Fat 1 isoform X2"/>
    <property type="match status" value="1"/>
</dbReference>
<dbReference type="FunFam" id="2.10.25.10:FF:000296">
    <property type="entry name" value="Sushi, nidogen and EGF like domains 1"/>
    <property type="match status" value="1"/>
</dbReference>
<dbReference type="FunFam" id="2.10.25.10:FF:000308">
    <property type="entry name" value="Sushi, nidogen and EGF like domains 1"/>
    <property type="match status" value="1"/>
</dbReference>
<dbReference type="FunFam" id="2.10.25.10:FF:000360">
    <property type="entry name" value="Sushi, nidogen and EGF like domains 1"/>
    <property type="match status" value="1"/>
</dbReference>
<dbReference type="FunFam" id="2.10.25.10:FF:000365">
    <property type="entry name" value="Sushi, nidogen and EGF like domains 1"/>
    <property type="match status" value="1"/>
</dbReference>
<dbReference type="FunFam" id="2.10.25.10:FF:000457">
    <property type="entry name" value="Sushi, nidogen and EGF like domains 1"/>
    <property type="match status" value="1"/>
</dbReference>
<dbReference type="FunFam" id="2.10.25.10:FF:000745">
    <property type="entry name" value="Sushi, nidogen and EGF like domains 1"/>
    <property type="match status" value="1"/>
</dbReference>
<dbReference type="FunFam" id="2.60.40.10:FF:000633">
    <property type="entry name" value="Sushi, nidogen and EGF like domains 1"/>
    <property type="match status" value="1"/>
</dbReference>
<dbReference type="FunFam" id="2.10.25.10:FF:000239">
    <property type="entry name" value="Sushi, nidogen and EGF-like domain-containing protein 1"/>
    <property type="match status" value="1"/>
</dbReference>
<dbReference type="FunFam" id="2.10.25.10:FF:000213">
    <property type="entry name" value="sushi, nidogen and EGF-like domain-containing protein 1"/>
    <property type="match status" value="1"/>
</dbReference>
<dbReference type="FunFam" id="2.10.25.10:FF:000251">
    <property type="entry name" value="sushi, nidogen and EGF-like domain-containing protein 1"/>
    <property type="match status" value="1"/>
</dbReference>
<dbReference type="FunFam" id="2.10.25.10:FF:000373">
    <property type="entry name" value="sushi, nidogen and EGF-like domain-containing protein 1"/>
    <property type="match status" value="1"/>
</dbReference>
<dbReference type="FunFam" id="2.10.25.10:FF:000283">
    <property type="entry name" value="sushi, nidogen and EGF-like domain-containing protein 1 isoform X2"/>
    <property type="match status" value="1"/>
</dbReference>
<dbReference type="FunFam" id="2.60.40.10:FF:000618">
    <property type="entry name" value="sushi, nidogen and EGF-like domain-containing protein 1 isoform X2"/>
    <property type="match status" value="1"/>
</dbReference>
<dbReference type="FunFam" id="2.60.40.10:FF:000870">
    <property type="entry name" value="sushi, nidogen and EGF-like domain-containing protein 1 isoform X3"/>
    <property type="match status" value="1"/>
</dbReference>
<dbReference type="FunFam" id="2.10.25.10:FF:000255">
    <property type="entry name" value="Sushi, nidogen and EGF-like domains 1"/>
    <property type="match status" value="1"/>
</dbReference>
<dbReference type="FunFam" id="2.10.25.10:FF:000006">
    <property type="entry name" value="Versican core protein-like isoform 1"/>
    <property type="match status" value="1"/>
</dbReference>
<dbReference type="Gene3D" id="2.60.40.10">
    <property type="entry name" value="Immunoglobulins"/>
    <property type="match status" value="3"/>
</dbReference>
<dbReference type="Gene3D" id="2.10.25.10">
    <property type="entry name" value="Laminin"/>
    <property type="match status" value="15"/>
</dbReference>
<dbReference type="InterPro" id="IPR001881">
    <property type="entry name" value="EGF-like_Ca-bd_dom"/>
</dbReference>
<dbReference type="InterPro" id="IPR013032">
    <property type="entry name" value="EGF-like_CS"/>
</dbReference>
<dbReference type="InterPro" id="IPR000742">
    <property type="entry name" value="EGF-like_dom"/>
</dbReference>
<dbReference type="InterPro" id="IPR000152">
    <property type="entry name" value="EGF-type_Asp/Asn_hydroxyl_site"/>
</dbReference>
<dbReference type="InterPro" id="IPR018097">
    <property type="entry name" value="EGF_Ca-bd_CS"/>
</dbReference>
<dbReference type="InterPro" id="IPR003961">
    <property type="entry name" value="FN3_dom"/>
</dbReference>
<dbReference type="InterPro" id="IPR036116">
    <property type="entry name" value="FN3_sf"/>
</dbReference>
<dbReference type="InterPro" id="IPR013783">
    <property type="entry name" value="Ig-like_fold"/>
</dbReference>
<dbReference type="InterPro" id="IPR003886">
    <property type="entry name" value="NIDO_dom"/>
</dbReference>
<dbReference type="InterPro" id="IPR051830">
    <property type="entry name" value="NOTCH_homolog"/>
</dbReference>
<dbReference type="InterPro" id="IPR035976">
    <property type="entry name" value="Sushi/SCR/CCP_sf"/>
</dbReference>
<dbReference type="InterPro" id="IPR000436">
    <property type="entry name" value="Sushi_SCR_CCP_dom"/>
</dbReference>
<dbReference type="PANTHER" id="PTHR24033">
    <property type="entry name" value="EGF-LIKE DOMAIN-CONTAINING PROTEIN"/>
    <property type="match status" value="1"/>
</dbReference>
<dbReference type="PANTHER" id="PTHR24033:SF151">
    <property type="entry name" value="NOTCH 2"/>
    <property type="match status" value="1"/>
</dbReference>
<dbReference type="Pfam" id="PF00008">
    <property type="entry name" value="EGF"/>
    <property type="match status" value="11"/>
</dbReference>
<dbReference type="Pfam" id="PF00041">
    <property type="entry name" value="fn3"/>
    <property type="match status" value="3"/>
</dbReference>
<dbReference type="Pfam" id="PF12661">
    <property type="entry name" value="hEGF"/>
    <property type="match status" value="3"/>
</dbReference>
<dbReference type="Pfam" id="PF06119">
    <property type="entry name" value="NIDO"/>
    <property type="match status" value="1"/>
</dbReference>
<dbReference type="PRINTS" id="PR00010">
    <property type="entry name" value="EGFBLOOD"/>
</dbReference>
<dbReference type="SMART" id="SM00032">
    <property type="entry name" value="CCP"/>
    <property type="match status" value="1"/>
</dbReference>
<dbReference type="SMART" id="SM00181">
    <property type="entry name" value="EGF"/>
    <property type="match status" value="15"/>
</dbReference>
<dbReference type="SMART" id="SM00179">
    <property type="entry name" value="EGF_CA"/>
    <property type="match status" value="14"/>
</dbReference>
<dbReference type="SMART" id="SM00060">
    <property type="entry name" value="FN3"/>
    <property type="match status" value="3"/>
</dbReference>
<dbReference type="SMART" id="SM00539">
    <property type="entry name" value="NIDO"/>
    <property type="match status" value="1"/>
</dbReference>
<dbReference type="SUPFAM" id="SSF57535">
    <property type="entry name" value="Complement control module/SCR domain"/>
    <property type="match status" value="1"/>
</dbReference>
<dbReference type="SUPFAM" id="SSF57196">
    <property type="entry name" value="EGF/Laminin"/>
    <property type="match status" value="15"/>
</dbReference>
<dbReference type="SUPFAM" id="SSF49265">
    <property type="entry name" value="Fibronectin type III"/>
    <property type="match status" value="2"/>
</dbReference>
<dbReference type="PROSITE" id="PS00010">
    <property type="entry name" value="ASX_HYDROXYL"/>
    <property type="match status" value="5"/>
</dbReference>
<dbReference type="PROSITE" id="PS00022">
    <property type="entry name" value="EGF_1"/>
    <property type="match status" value="15"/>
</dbReference>
<dbReference type="PROSITE" id="PS01186">
    <property type="entry name" value="EGF_2"/>
    <property type="match status" value="13"/>
</dbReference>
<dbReference type="PROSITE" id="PS50026">
    <property type="entry name" value="EGF_3"/>
    <property type="match status" value="15"/>
</dbReference>
<dbReference type="PROSITE" id="PS01187">
    <property type="entry name" value="EGF_CA"/>
    <property type="match status" value="3"/>
</dbReference>
<dbReference type="PROSITE" id="PS50853">
    <property type="entry name" value="FN3"/>
    <property type="match status" value="3"/>
</dbReference>
<dbReference type="PROSITE" id="PS51220">
    <property type="entry name" value="NIDO"/>
    <property type="match status" value="1"/>
</dbReference>
<dbReference type="PROSITE" id="PS50923">
    <property type="entry name" value="SUSHI"/>
    <property type="match status" value="1"/>
</dbReference>
<sequence length="1413" mass="152204">MRHGVAWALLVAAALGLGARGVRGAVALADFYPFGAERGDAVTPKQDDGGSGLRPLSVPFPFFGAEHSGLYVNNNGIISFLKEVSQFTPVAFPIAKDRCVVAAFWADVDNRRAGDVYYREATDPAMLRRATEDVRHYFPELLDFNATWVFVATWYRVTFFGGSSSSPVNTFQTVLITDGKLSFTIFNYESIVWTTGTHASSGGNATGLGGIAAQAGFNAGDGQRYFSIPGSRTADMAEVETTTNVGVPGRWAFRIDDAQVRVGGCGHTTSVCLALRPCLNGGKCIDDCVTGNPSYTCSCLSGFTGRRCHLDVNECASQPCQNGGTCTHGINSFRCQCPAGFGGPTCETAQSPCDTKECQHGGQCQVENGSAVCVCQAGYTGAACEMDVDDCSPDPCLNGGSCVDLVGNYTCLCAEPFKGLRCETGDHPVPDACLSAPCHNGGTCVDADQGYVCECPEGFMGLDCRERVPDDCECRNGGRCLGANTTLCQCPLGFFGLLCEFEITAMPCNMNTQCPDGGYCMEHGGSYLCVCHTDHNASHSLPSPCDSDPCFNGGSCDAHDDSYTCECPRGFHGKHCEKARPHLCSSGPCRNGGTCKEAGGEYHCSCPYRFTGRHCEIGKPDSCASGPCHNGGTCFHYIGKYKCDCPPGFSGRHCEIAPSPCFRSPCVNGGTCEDRDTDFFCHCQAGYMGRRCQAEVDCGPPEEVKHATLRFNGTRLGAVALYACDRGYSLSAPSRIRVCQPHGVWSEPPQCLEIDECRSQPCLHGGSCQDRVAGYLCLCSTGYEGAHCELERDECRAHPCRNGGSCRNLPGAYVCRCPAGFVGVHCETEVDACDSSPCQHGGRCESGGGAYLCVCPESFFGYHCETVSDPCFSSPCGGRGYCLASNGSHSCTCKVGYTGEDCAKELFPPTALKMERVEESGVSISWNPPNGPAARQMLDGYAVTYVSSDGSYRRTDFVDRTRSSHQLQALAAGRAYNISVFSVKRNSNNKNDISRPAVLLARTRPRPVEGFEVTNVTASTISVQWALHRIRHATVSGVRVSIRHPEALRDQATDVDRSVDRFTFRALLPGKRYTIQLTTLSGLRGEEHPTESLATAPTHVWTRPLPPANLTAARVTATSAHVVWDAPTPGSLLEAYVINVTTSQSTKSRYVPNGKLASYTVRDLLPGRRYQLSVIAVQSTELGPQHSEPAHLYIITSPRDGADRRWHQGGHHPRVLKNRPPPARLPELRLLNDHSAPETPTQPPRFSELVDGRGRVSARFGGSPSKAATVRSQPTASAQLENMEEAPKRVSLALQLPEHGSKDIGNVPGNCSENPCQNGGTCVPGADAHSCDCGPGFKGRRCELACIKVSRPCTRLFSETKAFPVWEGGVCHHVYKRVYRVHQDICFKESCESTSLKKTPNRKQSKSQTLEKS</sequence>
<gene>
    <name evidence="12 15" type="primary">SNED1</name>
</gene>
<reference key="1">
    <citation type="journal article" date="2005" name="Nature">
        <title>Generation and annotation of the DNA sequences of human chromosomes 2 and 4.</title>
        <authorList>
            <person name="Hillier L.W."/>
            <person name="Graves T.A."/>
            <person name="Fulton R.S."/>
            <person name="Fulton L.A."/>
            <person name="Pepin K.H."/>
            <person name="Minx P."/>
            <person name="Wagner-McPherson C."/>
            <person name="Layman D."/>
            <person name="Wylie K."/>
            <person name="Sekhon M."/>
            <person name="Becker M.C."/>
            <person name="Fewell G.A."/>
            <person name="Delehaunty K.D."/>
            <person name="Miner T.L."/>
            <person name="Nash W.E."/>
            <person name="Kremitzki C."/>
            <person name="Oddy L."/>
            <person name="Du H."/>
            <person name="Sun H."/>
            <person name="Bradshaw-Cordum H."/>
            <person name="Ali J."/>
            <person name="Carter J."/>
            <person name="Cordes M."/>
            <person name="Harris A."/>
            <person name="Isak A."/>
            <person name="van Brunt A."/>
            <person name="Nguyen C."/>
            <person name="Du F."/>
            <person name="Courtney L."/>
            <person name="Kalicki J."/>
            <person name="Ozersky P."/>
            <person name="Abbott S."/>
            <person name="Armstrong J."/>
            <person name="Belter E.A."/>
            <person name="Caruso L."/>
            <person name="Cedroni M."/>
            <person name="Cotton M."/>
            <person name="Davidson T."/>
            <person name="Desai A."/>
            <person name="Elliott G."/>
            <person name="Erb T."/>
            <person name="Fronick C."/>
            <person name="Gaige T."/>
            <person name="Haakenson W."/>
            <person name="Haglund K."/>
            <person name="Holmes A."/>
            <person name="Harkins R."/>
            <person name="Kim K."/>
            <person name="Kruchowski S.S."/>
            <person name="Strong C.M."/>
            <person name="Grewal N."/>
            <person name="Goyea E."/>
            <person name="Hou S."/>
            <person name="Levy A."/>
            <person name="Martinka S."/>
            <person name="Mead K."/>
            <person name="McLellan M.D."/>
            <person name="Meyer R."/>
            <person name="Randall-Maher J."/>
            <person name="Tomlinson C."/>
            <person name="Dauphin-Kohlberg S."/>
            <person name="Kozlowicz-Reilly A."/>
            <person name="Shah N."/>
            <person name="Swearengen-Shahid S."/>
            <person name="Snider J."/>
            <person name="Strong J.T."/>
            <person name="Thompson J."/>
            <person name="Yoakum M."/>
            <person name="Leonard S."/>
            <person name="Pearman C."/>
            <person name="Trani L."/>
            <person name="Radionenko M."/>
            <person name="Waligorski J.E."/>
            <person name="Wang C."/>
            <person name="Rock S.M."/>
            <person name="Tin-Wollam A.-M."/>
            <person name="Maupin R."/>
            <person name="Latreille P."/>
            <person name="Wendl M.C."/>
            <person name="Yang S.-P."/>
            <person name="Pohl C."/>
            <person name="Wallis J.W."/>
            <person name="Spieth J."/>
            <person name="Bieri T.A."/>
            <person name="Berkowicz N."/>
            <person name="Nelson J.O."/>
            <person name="Osborne J."/>
            <person name="Ding L."/>
            <person name="Meyer R."/>
            <person name="Sabo A."/>
            <person name="Shotland Y."/>
            <person name="Sinha P."/>
            <person name="Wohldmann P.E."/>
            <person name="Cook L.L."/>
            <person name="Hickenbotham M.T."/>
            <person name="Eldred J."/>
            <person name="Williams D."/>
            <person name="Jones T.A."/>
            <person name="She X."/>
            <person name="Ciccarelli F.D."/>
            <person name="Izaurralde E."/>
            <person name="Taylor J."/>
            <person name="Schmutz J."/>
            <person name="Myers R.M."/>
            <person name="Cox D.R."/>
            <person name="Huang X."/>
            <person name="McPherson J.D."/>
            <person name="Mardis E.R."/>
            <person name="Clifton S.W."/>
            <person name="Warren W.C."/>
            <person name="Chinwalla A.T."/>
            <person name="Eddy S.R."/>
            <person name="Marra M.A."/>
            <person name="Ovcharenko I."/>
            <person name="Furey T.S."/>
            <person name="Miller W."/>
            <person name="Eichler E.E."/>
            <person name="Bork P."/>
            <person name="Suyama M."/>
            <person name="Torrents D."/>
            <person name="Waterston R.H."/>
            <person name="Wilson R.K."/>
        </authorList>
    </citation>
    <scope>NUCLEOTIDE SEQUENCE [LARGE SCALE GENOMIC DNA]</scope>
</reference>
<reference key="2">
    <citation type="submission" date="2002-01" db="EMBL/GenBank/DDBJ databases">
        <title>The nucleotide sequence of a long cDNA clone isolated from human spleen.</title>
        <authorList>
            <person name="Jikuya H."/>
            <person name="Takano J."/>
            <person name="Nomura N."/>
            <person name="Kikuno R."/>
            <person name="Nagase T."/>
            <person name="Ohara O."/>
        </authorList>
    </citation>
    <scope>NUCLEOTIDE SEQUENCE [LARGE SCALE MRNA] OF 132-1413 (ISOFORM 1)</scope>
    <scope>NUCLEOTIDE SEQUENCE [LARGE SCALE MRNA] OF 831-1413 (ISOFORM 2)</scope>
    <source>
        <tissue>Spleen</tissue>
    </source>
</reference>
<reference key="3">
    <citation type="journal article" date="2004" name="J. Biol. Chem.">
        <title>Insulin-response element-binding protein 1: a novel Akt substrate involved in transcriptional action of insulin.</title>
        <authorList>
            <person name="Villafuerte B.C."/>
            <person name="Phillips L.S."/>
            <person name="Rane M.J."/>
            <person name="Zhao W."/>
        </authorList>
    </citation>
    <scope>NUCLEOTIDE SEQUENCE [MRNA] OF 367-1413 (ISOFORM 1)</scope>
    <scope>NUCLEOTIDE SEQUENCE [MRNA] OF 938-1413 (ISOFORM 4)</scope>
</reference>
<reference key="4">
    <citation type="journal article" date="2004" name="Genome Res.">
        <title>The status, quality, and expansion of the NIH full-length cDNA project: the Mammalian Gene Collection (MGC).</title>
        <authorList>
            <consortium name="The MGC Project Team"/>
        </authorList>
    </citation>
    <scope>NUCLEOTIDE SEQUENCE [LARGE SCALE MRNA] OF 791-1413 (ISOFORM 3)</scope>
    <scope>VARIANT SER-1362</scope>
    <source>
        <tissue>Lung</tissue>
    </source>
</reference>
<reference key="5">
    <citation type="journal article" date="2021" name="Biochem. J.">
        <title>Computational and experimental characterization of the novel ECM glycoprotein SNED1 and prediction of its interactome.</title>
        <authorList>
            <person name="Vallet S.D."/>
            <person name="Davis M.N."/>
            <person name="Barque A."/>
            <person name="Thahab A.H."/>
            <person name="Ricard-Blum S."/>
            <person name="Naba A."/>
        </authorList>
    </citation>
    <scope>SUBCELLULAR LOCATION</scope>
    <scope>GLYCOSYLATION</scope>
    <scope>PHOSPHORYLATION</scope>
</reference>
<organism>
    <name type="scientific">Homo sapiens</name>
    <name type="common">Human</name>
    <dbReference type="NCBI Taxonomy" id="9606"/>
    <lineage>
        <taxon>Eukaryota</taxon>
        <taxon>Metazoa</taxon>
        <taxon>Chordata</taxon>
        <taxon>Craniata</taxon>
        <taxon>Vertebrata</taxon>
        <taxon>Euteleostomi</taxon>
        <taxon>Mammalia</taxon>
        <taxon>Eutheria</taxon>
        <taxon>Euarchontoglires</taxon>
        <taxon>Primates</taxon>
        <taxon>Haplorrhini</taxon>
        <taxon>Catarrhini</taxon>
        <taxon>Hominidae</taxon>
        <taxon>Homo</taxon>
    </lineage>
</organism>
<evidence type="ECO:0000250" key="1">
    <source>
        <dbReference type="UniProtKB" id="Q70E20"/>
    </source>
</evidence>
<evidence type="ECO:0000255" key="2"/>
<evidence type="ECO:0000255" key="3">
    <source>
        <dbReference type="PROSITE-ProRule" id="PRU00076"/>
    </source>
</evidence>
<evidence type="ECO:0000255" key="4">
    <source>
        <dbReference type="PROSITE-ProRule" id="PRU00302"/>
    </source>
</evidence>
<evidence type="ECO:0000255" key="5">
    <source>
        <dbReference type="PROSITE-ProRule" id="PRU00316"/>
    </source>
</evidence>
<evidence type="ECO:0000255" key="6">
    <source>
        <dbReference type="PROSITE-ProRule" id="PRU00570"/>
    </source>
</evidence>
<evidence type="ECO:0000256" key="7">
    <source>
        <dbReference type="SAM" id="MobiDB-lite"/>
    </source>
</evidence>
<evidence type="ECO:0000269" key="8">
    <source>
    </source>
</evidence>
<evidence type="ECO:0000269" key="9">
    <source>
    </source>
</evidence>
<evidence type="ECO:0000303" key="10">
    <source>
    </source>
</evidence>
<evidence type="ECO:0000303" key="11">
    <source>
    </source>
</evidence>
<evidence type="ECO:0000303" key="12">
    <source>
    </source>
</evidence>
<evidence type="ECO:0000303" key="13">
    <source ref="2"/>
</evidence>
<evidence type="ECO:0000305" key="14"/>
<evidence type="ECO:0000312" key="15">
    <source>
        <dbReference type="HGNC" id="HGNC:24696"/>
    </source>
</evidence>
<keyword id="KW-0025">Alternative splicing</keyword>
<keyword id="KW-0106">Calcium</keyword>
<keyword id="KW-1015">Disulfide bond</keyword>
<keyword id="KW-0245">EGF-like domain</keyword>
<keyword id="KW-0272">Extracellular matrix</keyword>
<keyword id="KW-0325">Glycoprotein</keyword>
<keyword id="KW-0597">Phosphoprotein</keyword>
<keyword id="KW-1267">Proteomics identification</keyword>
<keyword id="KW-1185">Reference proteome</keyword>
<keyword id="KW-0677">Repeat</keyword>
<keyword id="KW-0964">Secreted</keyword>
<keyword id="KW-0732">Signal</keyword>
<keyword id="KW-0768">Sushi</keyword>
<accession>Q8TER0</accession>
<accession>B5MDC3</accession>
<accession>B7WNK6</accession>
<accession>B7WPM0</accession>
<accession>Q336F4</accession>
<accession>Q336F5</accession>
<accession>Q8N369</accession>
<accession>Q8TEP7</accession>